<evidence type="ECO:0000255" key="1">
    <source>
        <dbReference type="HAMAP-Rule" id="MF_00006"/>
    </source>
</evidence>
<feature type="chain" id="PRO_0000137754" description="Argininosuccinate lyase">
    <location>
        <begin position="1"/>
        <end position="460"/>
    </location>
</feature>
<reference key="1">
    <citation type="journal article" date="2005" name="PLoS Biol.">
        <title>Major structural differences and novel potential virulence mechanisms from the genomes of multiple Campylobacter species.</title>
        <authorList>
            <person name="Fouts D.E."/>
            <person name="Mongodin E.F."/>
            <person name="Mandrell R.E."/>
            <person name="Miller W.G."/>
            <person name="Rasko D.A."/>
            <person name="Ravel J."/>
            <person name="Brinkac L.M."/>
            <person name="DeBoy R.T."/>
            <person name="Parker C.T."/>
            <person name="Daugherty S.C."/>
            <person name="Dodson R.J."/>
            <person name="Durkin A.S."/>
            <person name="Madupu R."/>
            <person name="Sullivan S.A."/>
            <person name="Shetty J.U."/>
            <person name="Ayodeji M.A."/>
            <person name="Shvartsbeyn A."/>
            <person name="Schatz M.C."/>
            <person name="Badger J.H."/>
            <person name="Fraser C.M."/>
            <person name="Nelson K.E."/>
        </authorList>
    </citation>
    <scope>NUCLEOTIDE SEQUENCE [LARGE SCALE GENOMIC DNA]</scope>
    <source>
        <strain>RM1221</strain>
    </source>
</reference>
<dbReference type="EC" id="4.3.2.1" evidence="1"/>
<dbReference type="EMBL" id="CP000025">
    <property type="protein sequence ID" value="AAW35342.1"/>
    <property type="molecule type" value="Genomic_DNA"/>
</dbReference>
<dbReference type="RefSeq" id="WP_011049814.1">
    <property type="nucleotide sequence ID" value="NC_003912.7"/>
</dbReference>
<dbReference type="SMR" id="Q5HUM8"/>
<dbReference type="KEGG" id="cjr:CJE1009"/>
<dbReference type="HOGENOM" id="CLU_027272_2_3_7"/>
<dbReference type="UniPathway" id="UPA00068">
    <property type="reaction ID" value="UER00114"/>
</dbReference>
<dbReference type="GO" id="GO:0005829">
    <property type="term" value="C:cytosol"/>
    <property type="evidence" value="ECO:0007669"/>
    <property type="project" value="TreeGrafter"/>
</dbReference>
<dbReference type="GO" id="GO:0004056">
    <property type="term" value="F:argininosuccinate lyase activity"/>
    <property type="evidence" value="ECO:0007669"/>
    <property type="project" value="UniProtKB-UniRule"/>
</dbReference>
<dbReference type="GO" id="GO:0042450">
    <property type="term" value="P:arginine biosynthetic process via ornithine"/>
    <property type="evidence" value="ECO:0007669"/>
    <property type="project" value="InterPro"/>
</dbReference>
<dbReference type="GO" id="GO:0006526">
    <property type="term" value="P:L-arginine biosynthetic process"/>
    <property type="evidence" value="ECO:0007669"/>
    <property type="project" value="UniProtKB-UniRule"/>
</dbReference>
<dbReference type="CDD" id="cd01359">
    <property type="entry name" value="Argininosuccinate_lyase"/>
    <property type="match status" value="1"/>
</dbReference>
<dbReference type="FunFam" id="1.10.275.10:FF:000002">
    <property type="entry name" value="Argininosuccinate lyase"/>
    <property type="match status" value="1"/>
</dbReference>
<dbReference type="FunFam" id="1.10.40.30:FF:000001">
    <property type="entry name" value="Argininosuccinate lyase"/>
    <property type="match status" value="1"/>
</dbReference>
<dbReference type="FunFam" id="1.20.200.10:FF:000015">
    <property type="entry name" value="argininosuccinate lyase isoform X2"/>
    <property type="match status" value="1"/>
</dbReference>
<dbReference type="Gene3D" id="1.10.40.30">
    <property type="entry name" value="Fumarase/aspartase (C-terminal domain)"/>
    <property type="match status" value="1"/>
</dbReference>
<dbReference type="Gene3D" id="1.20.200.10">
    <property type="entry name" value="Fumarase/aspartase (Central domain)"/>
    <property type="match status" value="1"/>
</dbReference>
<dbReference type="Gene3D" id="1.10.275.10">
    <property type="entry name" value="Fumarase/aspartase (N-terminal domain)"/>
    <property type="match status" value="1"/>
</dbReference>
<dbReference type="HAMAP" id="MF_00006">
    <property type="entry name" value="Arg_succ_lyase"/>
    <property type="match status" value="1"/>
</dbReference>
<dbReference type="InterPro" id="IPR029419">
    <property type="entry name" value="Arg_succ_lyase_C"/>
</dbReference>
<dbReference type="InterPro" id="IPR009049">
    <property type="entry name" value="Argininosuccinate_lyase"/>
</dbReference>
<dbReference type="InterPro" id="IPR024083">
    <property type="entry name" value="Fumarase/histidase_N"/>
</dbReference>
<dbReference type="InterPro" id="IPR020557">
    <property type="entry name" value="Fumarate_lyase_CS"/>
</dbReference>
<dbReference type="InterPro" id="IPR000362">
    <property type="entry name" value="Fumarate_lyase_fam"/>
</dbReference>
<dbReference type="InterPro" id="IPR022761">
    <property type="entry name" value="Fumarate_lyase_N"/>
</dbReference>
<dbReference type="InterPro" id="IPR008948">
    <property type="entry name" value="L-Aspartase-like"/>
</dbReference>
<dbReference type="NCBIfam" id="TIGR00838">
    <property type="entry name" value="argH"/>
    <property type="match status" value="1"/>
</dbReference>
<dbReference type="PANTHER" id="PTHR43814">
    <property type="entry name" value="ARGININOSUCCINATE LYASE"/>
    <property type="match status" value="1"/>
</dbReference>
<dbReference type="PANTHER" id="PTHR43814:SF1">
    <property type="entry name" value="ARGININOSUCCINATE LYASE"/>
    <property type="match status" value="1"/>
</dbReference>
<dbReference type="Pfam" id="PF14698">
    <property type="entry name" value="ASL_C2"/>
    <property type="match status" value="1"/>
</dbReference>
<dbReference type="Pfam" id="PF00206">
    <property type="entry name" value="Lyase_1"/>
    <property type="match status" value="1"/>
</dbReference>
<dbReference type="PRINTS" id="PR00145">
    <property type="entry name" value="ARGSUCLYASE"/>
</dbReference>
<dbReference type="PRINTS" id="PR00149">
    <property type="entry name" value="FUMRATELYASE"/>
</dbReference>
<dbReference type="SUPFAM" id="SSF48557">
    <property type="entry name" value="L-aspartase-like"/>
    <property type="match status" value="1"/>
</dbReference>
<dbReference type="PROSITE" id="PS00163">
    <property type="entry name" value="FUMARATE_LYASES"/>
    <property type="match status" value="1"/>
</dbReference>
<protein>
    <recommendedName>
        <fullName evidence="1">Argininosuccinate lyase</fullName>
        <shortName evidence="1">ASAL</shortName>
        <ecNumber evidence="1">4.3.2.1</ecNumber>
    </recommendedName>
    <alternativeName>
        <fullName evidence="1">Arginosuccinase</fullName>
    </alternativeName>
</protein>
<gene>
    <name evidence="1" type="primary">argH</name>
    <name type="ordered locus">CJE1009</name>
</gene>
<organism>
    <name type="scientific">Campylobacter jejuni (strain RM1221)</name>
    <dbReference type="NCBI Taxonomy" id="195099"/>
    <lineage>
        <taxon>Bacteria</taxon>
        <taxon>Pseudomonadati</taxon>
        <taxon>Campylobacterota</taxon>
        <taxon>Epsilonproteobacteria</taxon>
        <taxon>Campylobacterales</taxon>
        <taxon>Campylobacteraceae</taxon>
        <taxon>Campylobacter</taxon>
    </lineage>
</organism>
<proteinExistence type="inferred from homology"/>
<comment type="catalytic activity">
    <reaction evidence="1">
        <text>2-(N(omega)-L-arginino)succinate = fumarate + L-arginine</text>
        <dbReference type="Rhea" id="RHEA:24020"/>
        <dbReference type="ChEBI" id="CHEBI:29806"/>
        <dbReference type="ChEBI" id="CHEBI:32682"/>
        <dbReference type="ChEBI" id="CHEBI:57472"/>
        <dbReference type="EC" id="4.3.2.1"/>
    </reaction>
</comment>
<comment type="pathway">
    <text evidence="1">Amino-acid biosynthesis; L-arginine biosynthesis; L-arginine from L-ornithine and carbamoyl phosphate: step 3/3.</text>
</comment>
<comment type="subcellular location">
    <subcellularLocation>
        <location evidence="1">Cytoplasm</location>
    </subcellularLocation>
</comment>
<comment type="similarity">
    <text evidence="1">Belongs to the lyase 1 family. Argininosuccinate lyase subfamily.</text>
</comment>
<sequence>MKNEMWSGRFSGASDELLKEFNASLNVDKTLFNEDIQGSIAHATMLESCGILKKEELDAIIKGLEQVRSEIEQGKFVFDIKDEDIHMAIEKRLSEIIGSEIGGRLHTARSRNDQVATDFKLFVKKSHIELIKLLKELIQTMLKHAKAHKKTIMPSFTHLQHAQPVSFSFYILAYAFMLMRDIKRLQNSLELADFSPLGSCACAGTSYATNRELSAKILGFKDIMSNAMDGVSDRDFALDLLYDIAVIFTHTSRLCEEMILFSSSEFSFITISDSFSTGSSIMPQKKNPDVCELIRGKTGRVYGNLISLLTIMKALPLAYNKDMQEDKEGIFDSVKTAKDSLIILNAMLKEIQINKENMLNACKKGHMLATDLADYLVREKNIPFRKAHFIVGNVVAQAEAQGIDISEIKDLSKIDPVFDEKAMELLNFEFSLNSKQSEGSSSIASVEKQIQILEGFIQNL</sequence>
<name>ARLY_CAMJR</name>
<keyword id="KW-0028">Amino-acid biosynthesis</keyword>
<keyword id="KW-0055">Arginine biosynthesis</keyword>
<keyword id="KW-0963">Cytoplasm</keyword>
<keyword id="KW-0456">Lyase</keyword>
<accession>Q5HUM8</accession>